<protein>
    <recommendedName>
        <fullName evidence="1">LL-diaminopimelate aminotransferase</fullName>
        <shortName evidence="1">DAP-AT</shortName>
        <shortName evidence="1">DAP-aminotransferase</shortName>
        <shortName evidence="1">LL-DAP-aminotransferase</shortName>
        <ecNumber evidence="1">2.6.1.83</ecNumber>
    </recommendedName>
</protein>
<organism>
    <name type="scientific">Prochlorococcus marinus subsp. pastoris (strain CCMP1986 / NIES-2087 / MED4)</name>
    <dbReference type="NCBI Taxonomy" id="59919"/>
    <lineage>
        <taxon>Bacteria</taxon>
        <taxon>Bacillati</taxon>
        <taxon>Cyanobacteriota</taxon>
        <taxon>Cyanophyceae</taxon>
        <taxon>Synechococcales</taxon>
        <taxon>Prochlorococcaceae</taxon>
        <taxon>Prochlorococcus</taxon>
    </lineage>
</organism>
<reference key="1">
    <citation type="journal article" date="2003" name="Nature">
        <title>Genome divergence in two Prochlorococcus ecotypes reflects oceanic niche differentiation.</title>
        <authorList>
            <person name="Rocap G."/>
            <person name="Larimer F.W."/>
            <person name="Lamerdin J.E."/>
            <person name="Malfatti S."/>
            <person name="Chain P."/>
            <person name="Ahlgren N.A."/>
            <person name="Arellano A."/>
            <person name="Coleman M."/>
            <person name="Hauser L."/>
            <person name="Hess W.R."/>
            <person name="Johnson Z.I."/>
            <person name="Land M.L."/>
            <person name="Lindell D."/>
            <person name="Post A.F."/>
            <person name="Regala W."/>
            <person name="Shah M."/>
            <person name="Shaw S.L."/>
            <person name="Steglich C."/>
            <person name="Sullivan M.B."/>
            <person name="Ting C.S."/>
            <person name="Tolonen A."/>
            <person name="Webb E.A."/>
            <person name="Zinser E.R."/>
            <person name="Chisholm S.W."/>
        </authorList>
    </citation>
    <scope>NUCLEOTIDE SEQUENCE [LARGE SCALE GENOMIC DNA]</scope>
    <source>
        <strain>CCMP1986 / NIES-2087 / MED4</strain>
    </source>
</reference>
<evidence type="ECO:0000255" key="1">
    <source>
        <dbReference type="HAMAP-Rule" id="MF_01642"/>
    </source>
</evidence>
<keyword id="KW-0032">Aminotransferase</keyword>
<keyword id="KW-0663">Pyridoxal phosphate</keyword>
<keyword id="KW-0808">Transferase</keyword>
<comment type="function">
    <text evidence="1">Involved in the synthesis of meso-diaminopimelate (m-DAP or DL-DAP), required for both lysine and peptidoglycan biosynthesis. Catalyzes the direct conversion of tetrahydrodipicolinate to LL-diaminopimelate.</text>
</comment>
<comment type="catalytic activity">
    <reaction evidence="1">
        <text>(2S,6S)-2,6-diaminopimelate + 2-oxoglutarate = (S)-2,3,4,5-tetrahydrodipicolinate + L-glutamate + H2O + H(+)</text>
        <dbReference type="Rhea" id="RHEA:23988"/>
        <dbReference type="ChEBI" id="CHEBI:15377"/>
        <dbReference type="ChEBI" id="CHEBI:15378"/>
        <dbReference type="ChEBI" id="CHEBI:16810"/>
        <dbReference type="ChEBI" id="CHEBI:16845"/>
        <dbReference type="ChEBI" id="CHEBI:29985"/>
        <dbReference type="ChEBI" id="CHEBI:57609"/>
        <dbReference type="EC" id="2.6.1.83"/>
    </reaction>
</comment>
<comment type="cofactor">
    <cofactor evidence="1">
        <name>pyridoxal 5'-phosphate</name>
        <dbReference type="ChEBI" id="CHEBI:597326"/>
    </cofactor>
</comment>
<comment type="pathway">
    <text evidence="1">Amino-acid biosynthesis; L-lysine biosynthesis via DAP pathway; LL-2,6-diaminopimelate from (S)-tetrahydrodipicolinate (aminotransferase route): step 1/1.</text>
</comment>
<comment type="subunit">
    <text evidence="1">Homodimer.</text>
</comment>
<comment type="similarity">
    <text evidence="1">Belongs to the class-I pyridoxal-phosphate-dependent aminotransferase family. LL-diaminopimelate aminotransferase subfamily.</text>
</comment>
<dbReference type="EC" id="2.6.1.83" evidence="1"/>
<dbReference type="EMBL" id="BX548174">
    <property type="protein sequence ID" value="CAE19959.1"/>
    <property type="molecule type" value="Genomic_DNA"/>
</dbReference>
<dbReference type="RefSeq" id="WP_011133128.1">
    <property type="nucleotide sequence ID" value="NC_005072.1"/>
</dbReference>
<dbReference type="SMR" id="Q7UZZ3"/>
<dbReference type="STRING" id="59919.PMM1500"/>
<dbReference type="KEGG" id="pmm:PMM1500"/>
<dbReference type="eggNOG" id="COG0436">
    <property type="taxonomic scope" value="Bacteria"/>
</dbReference>
<dbReference type="HOGENOM" id="CLU_051433_0_0_3"/>
<dbReference type="OrthoDB" id="9802328at2"/>
<dbReference type="UniPathway" id="UPA00034">
    <property type="reaction ID" value="UER00466"/>
</dbReference>
<dbReference type="Proteomes" id="UP000001026">
    <property type="component" value="Chromosome"/>
</dbReference>
<dbReference type="GO" id="GO:0010285">
    <property type="term" value="F:L,L-diaminopimelate aminotransferase activity"/>
    <property type="evidence" value="ECO:0007669"/>
    <property type="project" value="UniProtKB-UniRule"/>
</dbReference>
<dbReference type="GO" id="GO:0030170">
    <property type="term" value="F:pyridoxal phosphate binding"/>
    <property type="evidence" value="ECO:0007669"/>
    <property type="project" value="UniProtKB-UniRule"/>
</dbReference>
<dbReference type="GO" id="GO:0033362">
    <property type="term" value="P:lysine biosynthetic process via diaminopimelate, diaminopimelate-aminotransferase pathway"/>
    <property type="evidence" value="ECO:0007669"/>
    <property type="project" value="UniProtKB-UniRule"/>
</dbReference>
<dbReference type="CDD" id="cd00609">
    <property type="entry name" value="AAT_like"/>
    <property type="match status" value="1"/>
</dbReference>
<dbReference type="FunFam" id="3.40.640.10:FF:000099">
    <property type="entry name" value="LL-diaminopimelate aminotransferase, chloroplastic"/>
    <property type="match status" value="1"/>
</dbReference>
<dbReference type="Gene3D" id="3.90.1150.10">
    <property type="entry name" value="Aspartate Aminotransferase, domain 1"/>
    <property type="match status" value="1"/>
</dbReference>
<dbReference type="Gene3D" id="3.40.640.10">
    <property type="entry name" value="Type I PLP-dependent aspartate aminotransferase-like (Major domain)"/>
    <property type="match status" value="1"/>
</dbReference>
<dbReference type="HAMAP" id="MF_01642">
    <property type="entry name" value="DapL_aminotrans_1"/>
    <property type="match status" value="1"/>
</dbReference>
<dbReference type="InterPro" id="IPR004839">
    <property type="entry name" value="Aminotransferase_I/II_large"/>
</dbReference>
<dbReference type="InterPro" id="IPR019942">
    <property type="entry name" value="DapL/ALD1"/>
</dbReference>
<dbReference type="InterPro" id="IPR015424">
    <property type="entry name" value="PyrdxlP-dep_Trfase"/>
</dbReference>
<dbReference type="InterPro" id="IPR015421">
    <property type="entry name" value="PyrdxlP-dep_Trfase_major"/>
</dbReference>
<dbReference type="InterPro" id="IPR015422">
    <property type="entry name" value="PyrdxlP-dep_Trfase_small"/>
</dbReference>
<dbReference type="NCBIfam" id="TIGR03542">
    <property type="entry name" value="DAPAT_plant"/>
    <property type="match status" value="1"/>
</dbReference>
<dbReference type="PANTHER" id="PTHR43144">
    <property type="entry name" value="AMINOTRANSFERASE"/>
    <property type="match status" value="1"/>
</dbReference>
<dbReference type="Pfam" id="PF00155">
    <property type="entry name" value="Aminotran_1_2"/>
    <property type="match status" value="1"/>
</dbReference>
<dbReference type="SUPFAM" id="SSF53383">
    <property type="entry name" value="PLP-dependent transferases"/>
    <property type="match status" value="1"/>
</dbReference>
<feature type="chain" id="PRO_0000312542" description="LL-diaminopimelate aminotransferase">
    <location>
        <begin position="1"/>
        <end position="408"/>
    </location>
</feature>
<feature type="binding site" evidence="1">
    <location>
        <position position="15"/>
    </location>
    <ligand>
        <name>substrate</name>
    </ligand>
</feature>
<feature type="binding site" evidence="1">
    <location>
        <position position="42"/>
    </location>
    <ligand>
        <name>substrate</name>
    </ligand>
</feature>
<feature type="binding site" evidence="1">
    <location>
        <position position="72"/>
    </location>
    <ligand>
        <name>pyridoxal 5'-phosphate</name>
        <dbReference type="ChEBI" id="CHEBI:597326"/>
    </ligand>
</feature>
<feature type="binding site" evidence="1">
    <location>
        <begin position="108"/>
        <end position="109"/>
    </location>
    <ligand>
        <name>pyridoxal 5'-phosphate</name>
        <dbReference type="ChEBI" id="CHEBI:597326"/>
    </ligand>
</feature>
<feature type="binding site" evidence="1">
    <location>
        <position position="109"/>
    </location>
    <ligand>
        <name>substrate</name>
    </ligand>
</feature>
<feature type="binding site" evidence="1">
    <location>
        <position position="132"/>
    </location>
    <ligand>
        <name>pyridoxal 5'-phosphate</name>
        <dbReference type="ChEBI" id="CHEBI:597326"/>
    </ligand>
</feature>
<feature type="binding site" evidence="1">
    <location>
        <position position="132"/>
    </location>
    <ligand>
        <name>substrate</name>
    </ligand>
</feature>
<feature type="binding site" evidence="1">
    <location>
        <position position="187"/>
    </location>
    <ligand>
        <name>pyridoxal 5'-phosphate</name>
        <dbReference type="ChEBI" id="CHEBI:597326"/>
    </ligand>
</feature>
<feature type="binding site" evidence="1">
    <location>
        <position position="187"/>
    </location>
    <ligand>
        <name>substrate</name>
    </ligand>
</feature>
<feature type="binding site" evidence="1">
    <location>
        <position position="218"/>
    </location>
    <ligand>
        <name>pyridoxal 5'-phosphate</name>
        <dbReference type="ChEBI" id="CHEBI:597326"/>
    </ligand>
</feature>
<feature type="binding site" evidence="1">
    <location>
        <begin position="246"/>
        <end position="248"/>
    </location>
    <ligand>
        <name>pyridoxal 5'-phosphate</name>
        <dbReference type="ChEBI" id="CHEBI:597326"/>
    </ligand>
</feature>
<feature type="binding site" evidence="1">
    <location>
        <position position="257"/>
    </location>
    <ligand>
        <name>pyridoxal 5'-phosphate</name>
        <dbReference type="ChEBI" id="CHEBI:597326"/>
    </ligand>
</feature>
<feature type="binding site" evidence="1">
    <location>
        <position position="292"/>
    </location>
    <ligand>
        <name>pyridoxal 5'-phosphate</name>
        <dbReference type="ChEBI" id="CHEBI:597326"/>
    </ligand>
</feature>
<feature type="binding site" evidence="1">
    <location>
        <position position="292"/>
    </location>
    <ligand>
        <name>substrate</name>
    </ligand>
</feature>
<feature type="binding site" evidence="1">
    <location>
        <position position="388"/>
    </location>
    <ligand>
        <name>substrate</name>
    </ligand>
</feature>
<feature type="modified residue" description="N6-(pyridoxal phosphate)lysine" evidence="1">
    <location>
        <position position="249"/>
    </location>
</feature>
<accession>Q7UZZ3</accession>
<name>DAPAT_PROMP</name>
<proteinExistence type="inferred from homology"/>
<gene>
    <name evidence="1" type="primary">dapL</name>
    <name type="ordered locus">PMM1500</name>
</gene>
<sequence>MVKVNENYLKLKAGYLFPEISKRVNNYTQANSSSKVIKLGIGDVTEPLPKACVKAMGEALNEMGTNNGFKGYGPEQGYGWLREKISVNDFISRGCQISSEEIFVSDGSKCDSSNILDILGSDNLIAVTDPVYPVYVDTNVMTGRTGETLQNGTYQGLVYLAINEENKFQPEIPKKKVDIVYLCFPNNPTGATITKQELKKWVDYAIENKSLILFDAAYEAFIQDKNIPHSIYEIEGAKNCAIEFRSFSKNAGFTGVRCAYTVIPKNLSGQNSKGDKIDLWSLWNRRQCTKFNGVSYIVQRGAEAVYSSQGKKEVNSLIDFYMKNAEIMQNKLRSAGFKVYGGDNAPYVWIKVPDRMTSWDFFDYLLEKADVVGTPGSGFGLAGEGYFRLSAFNSRMNVNNAMERIINI</sequence>